<feature type="transit peptide" description="Chloroplast" evidence="2">
    <location>
        <begin position="1"/>
        <end position="31"/>
    </location>
</feature>
<feature type="transit peptide" description="Thylakoid" evidence="1">
    <location>
        <begin position="32"/>
        <end position="68"/>
    </location>
</feature>
<feature type="chain" id="PRO_0000419235" description="Photosynthetic NDH subunit of lumenal location 2, chloroplastic">
    <location>
        <begin position="69"/>
        <end position="190"/>
    </location>
</feature>
<feature type="coiled-coil region" evidence="2">
    <location>
        <begin position="87"/>
        <end position="107"/>
    </location>
</feature>
<feature type="coiled-coil region" evidence="2">
    <location>
        <begin position="139"/>
        <end position="159"/>
    </location>
</feature>
<feature type="splice variant" id="VSP_044136" description="In isoform 2." evidence="8">
    <original>LDFY</original>
    <variation>VYVI</variation>
    <location>
        <begin position="159"/>
        <end position="162"/>
    </location>
</feature>
<feature type="splice variant" id="VSP_044137" description="In isoform 2." evidence="8">
    <location>
        <begin position="163"/>
        <end position="190"/>
    </location>
</feature>
<accession>Q9XI73</accession>
<accession>Q0WN14</accession>
<accession>Q3EDD0</accession>
<comment type="function">
    <text evidence="4 5 8">NDH shuttles electrons from NAD(P)H:plastoquinone, via FMN and iron-sulfur (Fe-S) centers, to quinones in the photosynthetic chain and possibly in a chloroplast respiratory chain. The immediate electron acceptor for the enzyme in this species is believed to be plastoquinone. Couples the redox reaction to proton translocation, and thus conserves the redox energy in a proton gradient (Probable). Required for both formation and activity of the chloroplast NAD(P)H dehydrogenase (NDH) complex (PubMed:20430763, PubMed:20460499).</text>
</comment>
<comment type="subunit">
    <text evidence="4 5 6">Part of the chloroplast NDH complex, composed of a mixture of chloroplast and nucleus encoded subunits. Component of the NDH lumenal subcomplex, at least composed of PnsL1, PnsL2, PnsL3, PnsL4 and PnsL5.</text>
</comment>
<comment type="subcellular location">
    <subcellularLocation>
        <location evidence="3 5">Plastid</location>
        <location evidence="3 5">Chloroplast thylakoid membrane</location>
        <topology evidence="3 5">Peripheral membrane protein</topology>
        <orientation evidence="3 5">Lumenal side</orientation>
    </subcellularLocation>
    <text>Associated with the chloroplast NAD(P)H dehydrogenase/photosystem I (NDH/PSI) supercomplex.</text>
</comment>
<comment type="alternative products">
    <event type="alternative splicing"/>
    <isoform>
        <id>Q9XI73-1</id>
        <name>1</name>
        <sequence type="displayed"/>
    </isoform>
    <isoform>
        <id>Q9XI73-2</id>
        <name>2</name>
        <sequence type="described" ref="VSP_044136 VSP_044137"/>
    </isoform>
</comment>
<comment type="disruption phenotype">
    <text evidence="4 5">Impaired chloroplastic NAD(P)H dehydrogenase (NDH) activity leading to the loss of post-illumination increases in Chl fluorescence, probably due to a reduced stability of the NDH complex.</text>
</comment>
<comment type="similarity">
    <text evidence="8">Belongs to the PsbQ family.</text>
</comment>
<keyword id="KW-0002">3D-structure</keyword>
<keyword id="KW-0025">Alternative splicing</keyword>
<keyword id="KW-0150">Chloroplast</keyword>
<keyword id="KW-0175">Coiled coil</keyword>
<keyword id="KW-0903">Direct protein sequencing</keyword>
<keyword id="KW-0472">Membrane</keyword>
<keyword id="KW-0934">Plastid</keyword>
<keyword id="KW-1185">Reference proteome</keyword>
<keyword id="KW-0793">Thylakoid</keyword>
<keyword id="KW-0809">Transit peptide</keyword>
<keyword id="KW-0813">Transport</keyword>
<gene>
    <name evidence="7" type="primary">PNSL2</name>
    <name type="synonym">PQL1</name>
    <name type="synonym">PQL2</name>
    <name evidence="9" type="ordered locus">At1g14150</name>
    <name evidence="10" type="ORF">F7A19.23</name>
</gene>
<dbReference type="EMBL" id="AF083742">
    <property type="protein sequence ID" value="AAN60300.1"/>
    <property type="molecule type" value="mRNA"/>
</dbReference>
<dbReference type="EMBL" id="AC007576">
    <property type="protein sequence ID" value="AAD39297.1"/>
    <property type="molecule type" value="Genomic_DNA"/>
</dbReference>
<dbReference type="EMBL" id="CP002684">
    <property type="protein sequence ID" value="AEE29111.1"/>
    <property type="molecule type" value="Genomic_DNA"/>
</dbReference>
<dbReference type="EMBL" id="CP002684">
    <property type="protein sequence ID" value="AEE29112.1"/>
    <property type="molecule type" value="Genomic_DNA"/>
</dbReference>
<dbReference type="EMBL" id="AF370579">
    <property type="protein sequence ID" value="AAK49585.1"/>
    <property type="molecule type" value="mRNA"/>
</dbReference>
<dbReference type="EMBL" id="AY088325">
    <property type="protein sequence ID" value="AAM65864.1"/>
    <property type="molecule type" value="mRNA"/>
</dbReference>
<dbReference type="EMBL" id="AK229642">
    <property type="protein sequence ID" value="BAF01486.1"/>
    <property type="molecule type" value="mRNA"/>
</dbReference>
<dbReference type="PIR" id="A86275">
    <property type="entry name" value="A86275"/>
</dbReference>
<dbReference type="RefSeq" id="NP_563937.1">
    <molecule id="Q9XI73-1"/>
    <property type="nucleotide sequence ID" value="NM_101280.3"/>
</dbReference>
<dbReference type="RefSeq" id="NP_973820.1">
    <molecule id="Q9XI73-2"/>
    <property type="nucleotide sequence ID" value="NM_202091.2"/>
</dbReference>
<dbReference type="PDB" id="7WFF">
    <property type="method" value="EM"/>
    <property type="resolution" value="3.59 A"/>
    <property type="chains" value="g=1-190"/>
</dbReference>
<dbReference type="PDB" id="7WG5">
    <property type="method" value="EM"/>
    <property type="resolution" value="3.89 A"/>
    <property type="chains" value="g=1-190"/>
</dbReference>
<dbReference type="PDBsum" id="7WFF"/>
<dbReference type="PDBsum" id="7WG5"/>
<dbReference type="EMDB" id="EMD-32464"/>
<dbReference type="EMDB" id="EMD-32477"/>
<dbReference type="SMR" id="Q9XI73"/>
<dbReference type="BioGRID" id="23214">
    <property type="interactions" value="2"/>
</dbReference>
<dbReference type="FunCoup" id="Q9XI73">
    <property type="interactions" value="1020"/>
</dbReference>
<dbReference type="STRING" id="3702.Q9XI73"/>
<dbReference type="TCDB" id="3.D.1.8.1">
    <property type="family name" value="the h+ or na+-translocating nadh dehydrogenase (ndh) family"/>
</dbReference>
<dbReference type="PaxDb" id="3702-AT1G14150.1"/>
<dbReference type="ProteomicsDB" id="234691">
    <molecule id="Q9XI73-1"/>
</dbReference>
<dbReference type="EnsemblPlants" id="AT1G14150.1">
    <molecule id="Q9XI73-1"/>
    <property type="protein sequence ID" value="AT1G14150.1"/>
    <property type="gene ID" value="AT1G14150"/>
</dbReference>
<dbReference type="EnsemblPlants" id="AT1G14150.2">
    <molecule id="Q9XI73-2"/>
    <property type="protein sequence ID" value="AT1G14150.2"/>
    <property type="gene ID" value="AT1G14150"/>
</dbReference>
<dbReference type="GeneID" id="837974"/>
<dbReference type="Gramene" id="AT1G14150.1">
    <molecule id="Q9XI73-1"/>
    <property type="protein sequence ID" value="AT1G14150.1"/>
    <property type="gene ID" value="AT1G14150"/>
</dbReference>
<dbReference type="Gramene" id="AT1G14150.2">
    <molecule id="Q9XI73-2"/>
    <property type="protein sequence ID" value="AT1G14150.2"/>
    <property type="gene ID" value="AT1G14150"/>
</dbReference>
<dbReference type="KEGG" id="ath:AT1G14150"/>
<dbReference type="Araport" id="AT1G14150"/>
<dbReference type="TAIR" id="AT1G14150">
    <property type="gene designation" value="PNSL2"/>
</dbReference>
<dbReference type="eggNOG" id="ENOG502RXRQ">
    <property type="taxonomic scope" value="Eukaryota"/>
</dbReference>
<dbReference type="HOGENOM" id="CLU_081110_1_0_1"/>
<dbReference type="InParanoid" id="Q9XI73"/>
<dbReference type="OMA" id="MALAENW"/>
<dbReference type="OrthoDB" id="1877844at2759"/>
<dbReference type="PhylomeDB" id="Q9XI73"/>
<dbReference type="BioCyc" id="ARA:AT1G14150-MONOMER"/>
<dbReference type="PRO" id="PR:Q9XI73"/>
<dbReference type="Proteomes" id="UP000006548">
    <property type="component" value="Chromosome 1"/>
</dbReference>
<dbReference type="ExpressionAtlas" id="Q9XI73">
    <property type="expression patterns" value="baseline and differential"/>
</dbReference>
<dbReference type="GO" id="GO:0009507">
    <property type="term" value="C:chloroplast"/>
    <property type="evidence" value="ECO:0007005"/>
    <property type="project" value="TAIR"/>
</dbReference>
<dbReference type="GO" id="GO:0009534">
    <property type="term" value="C:chloroplast thylakoid"/>
    <property type="evidence" value="ECO:0000314"/>
    <property type="project" value="TAIR"/>
</dbReference>
<dbReference type="GO" id="GO:0009543">
    <property type="term" value="C:chloroplast thylakoid lumen"/>
    <property type="evidence" value="ECO:0000304"/>
    <property type="project" value="TAIR"/>
</dbReference>
<dbReference type="GO" id="GO:0009535">
    <property type="term" value="C:chloroplast thylakoid membrane"/>
    <property type="evidence" value="ECO:0007005"/>
    <property type="project" value="TAIR"/>
</dbReference>
<dbReference type="GO" id="GO:0019898">
    <property type="term" value="C:extrinsic component of membrane"/>
    <property type="evidence" value="ECO:0007669"/>
    <property type="project" value="InterPro"/>
</dbReference>
<dbReference type="GO" id="GO:0009344">
    <property type="term" value="C:nitrite reductase complex [NAD(P)H]"/>
    <property type="evidence" value="ECO:0000315"/>
    <property type="project" value="TAIR"/>
</dbReference>
<dbReference type="GO" id="GO:0009654">
    <property type="term" value="C:photosystem II oxygen evolving complex"/>
    <property type="evidence" value="ECO:0007669"/>
    <property type="project" value="InterPro"/>
</dbReference>
<dbReference type="GO" id="GO:0005509">
    <property type="term" value="F:calcium ion binding"/>
    <property type="evidence" value="ECO:0007669"/>
    <property type="project" value="InterPro"/>
</dbReference>
<dbReference type="GO" id="GO:0045156">
    <property type="term" value="F:electron transporter, transferring electrons within the cyclic electron transport pathway of photosynthesis activity"/>
    <property type="evidence" value="ECO:0000315"/>
    <property type="project" value="TAIR"/>
</dbReference>
<dbReference type="GO" id="GO:0009767">
    <property type="term" value="P:photosynthetic electron transport chain"/>
    <property type="evidence" value="ECO:0000315"/>
    <property type="project" value="TAIR"/>
</dbReference>
<dbReference type="FunFam" id="1.20.120.290:FF:000002">
    <property type="entry name" value="Photosynthetic NDH subunit of lumenal location 2, chloroplastic"/>
    <property type="match status" value="1"/>
</dbReference>
<dbReference type="Gene3D" id="1.20.120.290">
    <property type="entry name" value="Oxygen-evolving enhancer protein 3 (PsbQ), four-helix up-down bundle"/>
    <property type="match status" value="1"/>
</dbReference>
<dbReference type="InterPro" id="IPR023222">
    <property type="entry name" value="PsbQ-like_dom_sf"/>
</dbReference>
<dbReference type="InterPro" id="IPR008797">
    <property type="entry name" value="PSII_PsbQ"/>
</dbReference>
<dbReference type="InterPro" id="IPR054099">
    <property type="entry name" value="PSII_PsbQ_pln"/>
</dbReference>
<dbReference type="PANTHER" id="PTHR33399">
    <property type="entry name" value="OXYGEN-EVOLVING ENHANCER PROTEIN 3-1, CHLOROPLASTIC"/>
    <property type="match status" value="1"/>
</dbReference>
<dbReference type="PANTHER" id="PTHR33399:SF5">
    <property type="entry name" value="PHOTOSYNTHETIC NDH SUBUNIT OF LUMENAL LOCATION 2, CHLOROPLASTIC"/>
    <property type="match status" value="1"/>
</dbReference>
<dbReference type="Pfam" id="PF05757">
    <property type="entry name" value="PsbQ"/>
    <property type="match status" value="1"/>
</dbReference>
<dbReference type="SUPFAM" id="SSF101112">
    <property type="entry name" value="Oxygen-evolving enhancer protein 3"/>
    <property type="match status" value="1"/>
</dbReference>
<evidence type="ECO:0000250" key="1"/>
<evidence type="ECO:0000255" key="2"/>
<evidence type="ECO:0000269" key="3">
    <source>
    </source>
</evidence>
<evidence type="ECO:0000269" key="4">
    <source>
    </source>
</evidence>
<evidence type="ECO:0000269" key="5">
    <source>
    </source>
</evidence>
<evidence type="ECO:0000269" key="6">
    <source>
    </source>
</evidence>
<evidence type="ECO:0000303" key="7">
    <source>
    </source>
</evidence>
<evidence type="ECO:0000305" key="8"/>
<evidence type="ECO:0000312" key="9">
    <source>
        <dbReference type="Araport" id="AT1G14150"/>
    </source>
</evidence>
<evidence type="ECO:0000312" key="10">
    <source>
        <dbReference type="EMBL" id="AAD39297.1"/>
    </source>
</evidence>
<reference key="1">
    <citation type="submission" date="1998-08" db="EMBL/GenBank/DDBJ databases">
        <title>Signal peptide selection derived cDNAs from Arabidopsis thaliana leaves and guard cells.</title>
        <authorList>
            <person name="Stracke R."/>
            <person name="Palme K."/>
        </authorList>
    </citation>
    <scope>NUCLEOTIDE SEQUENCE [MRNA] (ISOFORM 1)</scope>
</reference>
<reference key="2">
    <citation type="journal article" date="2000" name="Nature">
        <title>Sequence and analysis of chromosome 1 of the plant Arabidopsis thaliana.</title>
        <authorList>
            <person name="Theologis A."/>
            <person name="Ecker J.R."/>
            <person name="Palm C.J."/>
            <person name="Federspiel N.A."/>
            <person name="Kaul S."/>
            <person name="White O."/>
            <person name="Alonso J."/>
            <person name="Altafi H."/>
            <person name="Araujo R."/>
            <person name="Bowman C.L."/>
            <person name="Brooks S.Y."/>
            <person name="Buehler E."/>
            <person name="Chan A."/>
            <person name="Chao Q."/>
            <person name="Chen H."/>
            <person name="Cheuk R.F."/>
            <person name="Chin C.W."/>
            <person name="Chung M.K."/>
            <person name="Conn L."/>
            <person name="Conway A.B."/>
            <person name="Conway A.R."/>
            <person name="Creasy T.H."/>
            <person name="Dewar K."/>
            <person name="Dunn P."/>
            <person name="Etgu P."/>
            <person name="Feldblyum T.V."/>
            <person name="Feng J.-D."/>
            <person name="Fong B."/>
            <person name="Fujii C.Y."/>
            <person name="Gill J.E."/>
            <person name="Goldsmith A.D."/>
            <person name="Haas B."/>
            <person name="Hansen N.F."/>
            <person name="Hughes B."/>
            <person name="Huizar L."/>
            <person name="Hunter J.L."/>
            <person name="Jenkins J."/>
            <person name="Johnson-Hopson C."/>
            <person name="Khan S."/>
            <person name="Khaykin E."/>
            <person name="Kim C.J."/>
            <person name="Koo H.L."/>
            <person name="Kremenetskaia I."/>
            <person name="Kurtz D.B."/>
            <person name="Kwan A."/>
            <person name="Lam B."/>
            <person name="Langin-Hooper S."/>
            <person name="Lee A."/>
            <person name="Lee J.M."/>
            <person name="Lenz C.A."/>
            <person name="Li J.H."/>
            <person name="Li Y.-P."/>
            <person name="Lin X."/>
            <person name="Liu S.X."/>
            <person name="Liu Z.A."/>
            <person name="Luros J.S."/>
            <person name="Maiti R."/>
            <person name="Marziali A."/>
            <person name="Militscher J."/>
            <person name="Miranda M."/>
            <person name="Nguyen M."/>
            <person name="Nierman W.C."/>
            <person name="Osborne B.I."/>
            <person name="Pai G."/>
            <person name="Peterson J."/>
            <person name="Pham P.K."/>
            <person name="Rizzo M."/>
            <person name="Rooney T."/>
            <person name="Rowley D."/>
            <person name="Sakano H."/>
            <person name="Salzberg S.L."/>
            <person name="Schwartz J.R."/>
            <person name="Shinn P."/>
            <person name="Southwick A.M."/>
            <person name="Sun H."/>
            <person name="Tallon L.J."/>
            <person name="Tambunga G."/>
            <person name="Toriumi M.J."/>
            <person name="Town C.D."/>
            <person name="Utterback T."/>
            <person name="Van Aken S."/>
            <person name="Vaysberg M."/>
            <person name="Vysotskaia V.S."/>
            <person name="Walker M."/>
            <person name="Wu D."/>
            <person name="Yu G."/>
            <person name="Fraser C.M."/>
            <person name="Venter J.C."/>
            <person name="Davis R.W."/>
        </authorList>
    </citation>
    <scope>NUCLEOTIDE SEQUENCE [LARGE SCALE GENOMIC DNA]</scope>
    <source>
        <strain>cv. Columbia</strain>
    </source>
</reference>
<reference key="3">
    <citation type="journal article" date="2017" name="Plant J.">
        <title>Araport11: a complete reannotation of the Arabidopsis thaliana reference genome.</title>
        <authorList>
            <person name="Cheng C.Y."/>
            <person name="Krishnakumar V."/>
            <person name="Chan A.P."/>
            <person name="Thibaud-Nissen F."/>
            <person name="Schobel S."/>
            <person name="Town C.D."/>
        </authorList>
    </citation>
    <scope>GENOME REANNOTATION</scope>
    <source>
        <strain>cv. Columbia</strain>
    </source>
</reference>
<reference key="4">
    <citation type="journal article" date="2003" name="Science">
        <title>Empirical analysis of transcriptional activity in the Arabidopsis genome.</title>
        <authorList>
            <person name="Yamada K."/>
            <person name="Lim J."/>
            <person name="Dale J.M."/>
            <person name="Chen H."/>
            <person name="Shinn P."/>
            <person name="Palm C.J."/>
            <person name="Southwick A.M."/>
            <person name="Wu H.C."/>
            <person name="Kim C.J."/>
            <person name="Nguyen M."/>
            <person name="Pham P.K."/>
            <person name="Cheuk R.F."/>
            <person name="Karlin-Newmann G."/>
            <person name="Liu S.X."/>
            <person name="Lam B."/>
            <person name="Sakano H."/>
            <person name="Wu T."/>
            <person name="Yu G."/>
            <person name="Miranda M."/>
            <person name="Quach H.L."/>
            <person name="Tripp M."/>
            <person name="Chang C.H."/>
            <person name="Lee J.M."/>
            <person name="Toriumi M.J."/>
            <person name="Chan M.M."/>
            <person name="Tang C.C."/>
            <person name="Onodera C.S."/>
            <person name="Deng J.M."/>
            <person name="Akiyama K."/>
            <person name="Ansari Y."/>
            <person name="Arakawa T."/>
            <person name="Banh J."/>
            <person name="Banno F."/>
            <person name="Bowser L."/>
            <person name="Brooks S.Y."/>
            <person name="Carninci P."/>
            <person name="Chao Q."/>
            <person name="Choy N."/>
            <person name="Enju A."/>
            <person name="Goldsmith A.D."/>
            <person name="Gurjal M."/>
            <person name="Hansen N.F."/>
            <person name="Hayashizaki Y."/>
            <person name="Johnson-Hopson C."/>
            <person name="Hsuan V.W."/>
            <person name="Iida K."/>
            <person name="Karnes M."/>
            <person name="Khan S."/>
            <person name="Koesema E."/>
            <person name="Ishida J."/>
            <person name="Jiang P.X."/>
            <person name="Jones T."/>
            <person name="Kawai J."/>
            <person name="Kamiya A."/>
            <person name="Meyers C."/>
            <person name="Nakajima M."/>
            <person name="Narusaka M."/>
            <person name="Seki M."/>
            <person name="Sakurai T."/>
            <person name="Satou M."/>
            <person name="Tamse R."/>
            <person name="Vaysberg M."/>
            <person name="Wallender E.K."/>
            <person name="Wong C."/>
            <person name="Yamamura Y."/>
            <person name="Yuan S."/>
            <person name="Shinozaki K."/>
            <person name="Davis R.W."/>
            <person name="Theologis A."/>
            <person name="Ecker J.R."/>
        </authorList>
    </citation>
    <scope>NUCLEOTIDE SEQUENCE [LARGE SCALE MRNA] (ISOFORM 1)</scope>
    <source>
        <strain>cv. Columbia</strain>
    </source>
</reference>
<reference key="5">
    <citation type="submission" date="2002-03" db="EMBL/GenBank/DDBJ databases">
        <title>Full-length cDNA from Arabidopsis thaliana.</title>
        <authorList>
            <person name="Brover V.V."/>
            <person name="Troukhan M.E."/>
            <person name="Alexandrov N.A."/>
            <person name="Lu Y.-P."/>
            <person name="Flavell R.B."/>
            <person name="Feldmann K.A."/>
        </authorList>
    </citation>
    <scope>NUCLEOTIDE SEQUENCE [LARGE SCALE MRNA] (ISOFORM 1)</scope>
</reference>
<reference key="6">
    <citation type="submission" date="2006-07" db="EMBL/GenBank/DDBJ databases">
        <title>Large-scale analysis of RIKEN Arabidopsis full-length (RAFL) cDNAs.</title>
        <authorList>
            <person name="Totoki Y."/>
            <person name="Seki M."/>
            <person name="Ishida J."/>
            <person name="Nakajima M."/>
            <person name="Enju A."/>
            <person name="Kamiya A."/>
            <person name="Narusaka M."/>
            <person name="Shin-i T."/>
            <person name="Nakagawa M."/>
            <person name="Sakamoto N."/>
            <person name="Oishi K."/>
            <person name="Kohara Y."/>
            <person name="Kobayashi M."/>
            <person name="Toyoda A."/>
            <person name="Sakaki Y."/>
            <person name="Sakurai T."/>
            <person name="Iida K."/>
            <person name="Akiyama K."/>
            <person name="Satou M."/>
            <person name="Toyoda T."/>
            <person name="Konagaya A."/>
            <person name="Carninci P."/>
            <person name="Kawai J."/>
            <person name="Hayashizaki Y."/>
            <person name="Shinozaki K."/>
        </authorList>
    </citation>
    <scope>NUCLEOTIDE SEQUENCE [LARGE SCALE MRNA] OF 9-190 (ISOFORM 1)</scope>
    <source>
        <strain>cv. Columbia</strain>
    </source>
</reference>
<reference key="7">
    <citation type="journal article" date="2008" name="PLoS ONE">
        <title>Sorting signals, N-terminal modifications and abundance of the chloroplast proteome.</title>
        <authorList>
            <person name="Zybailov B."/>
            <person name="Rutschow H."/>
            <person name="Friso G."/>
            <person name="Rudella A."/>
            <person name="Emanuelsson O."/>
            <person name="Sun Q."/>
            <person name="van Wijk K.J."/>
        </authorList>
    </citation>
    <scope>PROTEIN SEQUENCE OF 79-92</scope>
    <scope>IDENTIFICATION BY MASS SPECTROMETRY</scope>
    <scope>SUBCELLULAR LOCATION [LARGE SCALE ANALYSIS]</scope>
</reference>
<reference key="8">
    <citation type="journal article" date="2009" name="Mol. Plant">
        <title>Towards characterization of the chloroplast NAD(P)H dehydrogenase complex.</title>
        <authorList>
            <person name="Suorsa M."/>
            <person name="Sirpioe S."/>
            <person name="Aro E.M."/>
        </authorList>
    </citation>
    <scope>REVIEW</scope>
</reference>
<reference key="9">
    <citation type="journal article" date="2010" name="Plant Cell Physiol.">
        <title>Three PsbQ-like proteins are required for the function of the chloroplast NAD(P)H dehydrogenase complex in Arabidopsis.</title>
        <authorList>
            <person name="Yabuta S."/>
            <person name="Ifuku K."/>
            <person name="Takabayashi A."/>
            <person name="Ishihara S."/>
            <person name="Ido K."/>
            <person name="Ishikawa N."/>
            <person name="Endo T."/>
            <person name="Sato F."/>
        </authorList>
    </citation>
    <scope>FUNCTION</scope>
    <scope>DISRUPTION PHENOTYPE</scope>
    <scope>NOMENCLATURE</scope>
    <scope>SUBUNIT</scope>
    <source>
        <strain>cv. Columbia</strain>
    </source>
</reference>
<reference key="10">
    <citation type="journal article" date="2010" name="Plant Cell Physiol.">
        <title>Two proteins homologous to PsbQ are novel subunits of the chloroplast NAD(P)H dehydrogenase.</title>
        <authorList>
            <person name="Suorsa M."/>
            <person name="Sirpioe S."/>
            <person name="Paakkarinen V."/>
            <person name="Kumari N."/>
            <person name="Holmstroem M."/>
            <person name="Aro E.-M."/>
        </authorList>
    </citation>
    <scope>FUNCTION</scope>
    <scope>DISRUPTION PHENOTYPE</scope>
    <scope>SUBUNIT</scope>
    <scope>SUBCELLULAR LOCATION</scope>
</reference>
<reference key="11">
    <citation type="journal article" date="2011" name="Biochim. Biophys. Acta">
        <title>Structure and biogenesis of the chloroplast NAD(P)H dehydrogenase complex.</title>
        <authorList>
            <person name="Peng L."/>
            <person name="Yamamoto H."/>
            <person name="Shikanai T."/>
        </authorList>
    </citation>
    <scope>REVIEW</scope>
</reference>
<reference key="12">
    <citation type="journal article" date="2011" name="Plant Cell Physiol.">
        <title>Structure of the chloroplast NADH dehydrogenase-like complex: nomenclature for nuclear-encoded subunits.</title>
        <authorList>
            <person name="Ifuku K."/>
            <person name="Endo T."/>
            <person name="Shikanai T."/>
            <person name="Aro E.M."/>
        </authorList>
    </citation>
    <scope>NOMENCLATURE</scope>
    <scope>COMPONENT OF THE NDH COMPLEX</scope>
</reference>
<name>PNSL2_ARATH</name>
<protein>
    <recommendedName>
        <fullName evidence="7">Photosynthetic NDH subunit of lumenal location 2, chloroplastic</fullName>
    </recommendedName>
    <alternativeName>
        <fullName>PsbQ-like protein 1</fullName>
    </alternativeName>
</protein>
<sequence>MSSFTTTNTPPPYLLRKIYHRRVNQPFSVVCCTGEPQQDIFTRRRTLTSLITFTVIGGATSSALAQEKWGTRSFIKEKYFMPGLSPEDAAARIKQTAEGLRDMREMLDHMSWRYVIFYIRLKQAYLSQDLTNAMNILPESRRNDYVQAANELVENMSELDFYVRTPKVYESYLYYEKTLKSIDNVVEFLA</sequence>
<organism>
    <name type="scientific">Arabidopsis thaliana</name>
    <name type="common">Mouse-ear cress</name>
    <dbReference type="NCBI Taxonomy" id="3702"/>
    <lineage>
        <taxon>Eukaryota</taxon>
        <taxon>Viridiplantae</taxon>
        <taxon>Streptophyta</taxon>
        <taxon>Embryophyta</taxon>
        <taxon>Tracheophyta</taxon>
        <taxon>Spermatophyta</taxon>
        <taxon>Magnoliopsida</taxon>
        <taxon>eudicotyledons</taxon>
        <taxon>Gunneridae</taxon>
        <taxon>Pentapetalae</taxon>
        <taxon>rosids</taxon>
        <taxon>malvids</taxon>
        <taxon>Brassicales</taxon>
        <taxon>Brassicaceae</taxon>
        <taxon>Camelineae</taxon>
        <taxon>Arabidopsis</taxon>
    </lineage>
</organism>
<proteinExistence type="evidence at protein level"/>